<gene>
    <name type="primary">ZFC3H1</name>
    <name type="synonym">CCDC131</name>
    <name type="synonym">KIAA0546</name>
    <name type="synonym">PSRC2</name>
</gene>
<organism>
    <name type="scientific">Homo sapiens</name>
    <name type="common">Human</name>
    <dbReference type="NCBI Taxonomy" id="9606"/>
    <lineage>
        <taxon>Eukaryota</taxon>
        <taxon>Metazoa</taxon>
        <taxon>Chordata</taxon>
        <taxon>Craniata</taxon>
        <taxon>Vertebrata</taxon>
        <taxon>Euteleostomi</taxon>
        <taxon>Mammalia</taxon>
        <taxon>Eutheria</taxon>
        <taxon>Euarchontoglires</taxon>
        <taxon>Primates</taxon>
        <taxon>Haplorrhini</taxon>
        <taxon>Catarrhini</taxon>
        <taxon>Hominidae</taxon>
        <taxon>Homo</taxon>
    </lineage>
</organism>
<protein>
    <recommendedName>
        <fullName>Zinc finger C3H1 domain-containing protein</fullName>
    </recommendedName>
    <alternativeName>
        <fullName>Coiled-coil domain-containing protein 131</fullName>
    </alternativeName>
    <alternativeName>
        <fullName>Proline/serine-rich coiled-coil protein 2</fullName>
    </alternativeName>
</protein>
<keyword id="KW-0007">Acetylation</keyword>
<keyword id="KW-0025">Alternative splicing</keyword>
<keyword id="KW-0175">Coiled coil</keyword>
<keyword id="KW-0479">Metal-binding</keyword>
<keyword id="KW-0539">Nucleus</keyword>
<keyword id="KW-0597">Phosphoprotein</keyword>
<keyword id="KW-1267">Proteomics identification</keyword>
<keyword id="KW-1185">Reference proteome</keyword>
<keyword id="KW-0677">Repeat</keyword>
<keyword id="KW-0802">TPR repeat</keyword>
<keyword id="KW-0862">Zinc</keyword>
<keyword id="KW-0863">Zinc-finger</keyword>
<comment type="function">
    <text evidence="3">Subunit of the trimeric poly(A) tail exosome targeting (PAXT) complex, a complex that directs a subset of long and polyadenylated poly(A) RNAs for exosomal degradation. The RNA exosome is fundamental for the degradation of RNA in eukaryotic nuclei. Substrate targeting is facilitated by its cofactor MTREX, which links to RNA-binding protein adapters.</text>
</comment>
<comment type="subunit">
    <text evidence="3">Component of the poly(A) tail exosome targeting (PAXT) complex made of accessory factors, such as PABPN1, ZFC3H1 and MTREX, and which directs a subset of long and polyadenylated poly(A) RNAs for exosomal degradation (PubMed:27871484). Co-localizes with component of the CBC-ARS2 (CBCA) complex. Binds to RNA exosome components. Interacts with NCBP1/CBP80, ZC3H18, MTREX and PABPN1 in a RNase-insensitive manner, and with PABPC4, PABPC1 and ZC3H14 in a RNase-sensitive manner (PubMed:27871484).</text>
</comment>
<comment type="interaction">
    <interactant intactId="EBI-746701">
        <id>O60293</id>
    </interactant>
    <interactant intactId="EBI-77613">
        <id>P05067</id>
        <label>APP</label>
    </interactant>
    <organismsDiffer>false</organismsDiffer>
    <experiments>3</experiments>
</comment>
<comment type="interaction">
    <interactant intactId="EBI-746701">
        <id>O60293</id>
    </interactant>
    <interactant intactId="EBI-298355">
        <id>P10242</id>
        <label>MYB</label>
    </interactant>
    <organismsDiffer>false</organismsDiffer>
    <experiments>2</experiments>
</comment>
<comment type="interaction">
    <interactant intactId="EBI-25833374">
        <id>O60293-2</id>
    </interactant>
    <interactant intactId="EBI-12275524">
        <id>P23560-2</id>
        <label>BDNF</label>
    </interactant>
    <organismsDiffer>false</organismsDiffer>
    <experiments>3</experiments>
</comment>
<comment type="subcellular location">
    <subcellularLocation>
        <location evidence="3">Nucleus</location>
    </subcellularLocation>
    <text evidence="3">Excluded from the nucleolus.</text>
</comment>
<comment type="alternative products">
    <event type="alternative splicing"/>
    <isoform>
        <id>O60293-1</id>
        <name>1</name>
        <sequence type="displayed"/>
    </isoform>
    <isoform>
        <id>O60293-2</id>
        <name>2</name>
        <sequence type="described" ref="VSP_024995"/>
    </isoform>
    <isoform>
        <id>O60293-4</id>
        <name>4</name>
        <sequence type="described" ref="VSP_024992 VSP_024993"/>
    </isoform>
</comment>
<comment type="sequence caution" evidence="6">
    <conflict type="erroneous initiation">
        <sequence resource="EMBL-CDS" id="BAA25472"/>
    </conflict>
</comment>
<comment type="sequence caution" evidence="6">
    <conflict type="erroneous initiation">
        <sequence resource="EMBL-CDS" id="BAC86028"/>
    </conflict>
</comment>
<proteinExistence type="evidence at protein level"/>
<evidence type="ECO:0000255" key="1"/>
<evidence type="ECO:0000256" key="2">
    <source>
        <dbReference type="SAM" id="MobiDB-lite"/>
    </source>
</evidence>
<evidence type="ECO:0000269" key="3">
    <source>
    </source>
</evidence>
<evidence type="ECO:0000303" key="4">
    <source>
    </source>
</evidence>
<evidence type="ECO:0000303" key="5">
    <source>
    </source>
</evidence>
<evidence type="ECO:0000305" key="6"/>
<evidence type="ECO:0007744" key="7">
    <source>
    </source>
</evidence>
<evidence type="ECO:0007744" key="8">
    <source>
    </source>
</evidence>
<evidence type="ECO:0007744" key="9">
    <source>
    </source>
</evidence>
<evidence type="ECO:0007744" key="10">
    <source>
    </source>
</evidence>
<evidence type="ECO:0007744" key="11">
    <source>
    </source>
</evidence>
<evidence type="ECO:0007744" key="12">
    <source>
    </source>
</evidence>
<name>ZC3H1_HUMAN</name>
<dbReference type="EMBL" id="AB011118">
    <property type="protein sequence ID" value="BAA25472.2"/>
    <property type="status" value="ALT_INIT"/>
    <property type="molecule type" value="mRNA"/>
</dbReference>
<dbReference type="EMBL" id="BC064336">
    <property type="protein sequence ID" value="AAH64336.1"/>
    <property type="status" value="ALT_TERM"/>
    <property type="molecule type" value="mRNA"/>
</dbReference>
<dbReference type="EMBL" id="BC073843">
    <property type="protein sequence ID" value="AAH73843.1"/>
    <property type="molecule type" value="mRNA"/>
</dbReference>
<dbReference type="EMBL" id="AK125035">
    <property type="protein sequence ID" value="BAC86028.1"/>
    <property type="status" value="ALT_INIT"/>
    <property type="molecule type" value="mRNA"/>
</dbReference>
<dbReference type="CCDS" id="CCDS41813.1">
    <molecule id="O60293-1"/>
</dbReference>
<dbReference type="PIR" id="T00325">
    <property type="entry name" value="T00325"/>
</dbReference>
<dbReference type="RefSeq" id="NP_659419.3">
    <molecule id="O60293-1"/>
    <property type="nucleotide sequence ID" value="NM_144982.4"/>
</dbReference>
<dbReference type="BioGRID" id="128206">
    <property type="interactions" value="193"/>
</dbReference>
<dbReference type="ComplexPortal" id="CPX-2750">
    <property type="entry name" value="Poly(A) tail exosome targeting complex, RBM26 variant"/>
</dbReference>
<dbReference type="ComplexPortal" id="CPX-2752">
    <property type="entry name" value="Poly(A) tail exosome targeting complex, RBM27 variant"/>
</dbReference>
<dbReference type="CORUM" id="O60293"/>
<dbReference type="FunCoup" id="O60293">
    <property type="interactions" value="1835"/>
</dbReference>
<dbReference type="IntAct" id="O60293">
    <property type="interactions" value="155"/>
</dbReference>
<dbReference type="MINT" id="O60293"/>
<dbReference type="STRING" id="9606.ENSP00000368017"/>
<dbReference type="GlyGen" id="O60293">
    <property type="glycosylation" value="3 sites, 1 O-linked glycan (3 sites)"/>
</dbReference>
<dbReference type="iPTMnet" id="O60293"/>
<dbReference type="PhosphoSitePlus" id="O60293"/>
<dbReference type="BioMuta" id="ZFC3H1"/>
<dbReference type="jPOST" id="O60293"/>
<dbReference type="MassIVE" id="O60293"/>
<dbReference type="PaxDb" id="9606-ENSP00000368017"/>
<dbReference type="PeptideAtlas" id="O60293"/>
<dbReference type="ProteomicsDB" id="49324">
    <molecule id="O60293-1"/>
</dbReference>
<dbReference type="ProteomicsDB" id="49325">
    <molecule id="O60293-2"/>
</dbReference>
<dbReference type="ProteomicsDB" id="49326">
    <molecule id="O60293-4"/>
</dbReference>
<dbReference type="Pumba" id="O60293"/>
<dbReference type="Antibodypedia" id="1479">
    <property type="antibodies" value="70 antibodies from 18 providers"/>
</dbReference>
<dbReference type="DNASU" id="196441"/>
<dbReference type="Ensembl" id="ENST00000378743.9">
    <molecule id="O60293-1"/>
    <property type="protein sequence ID" value="ENSP00000368017.4"/>
    <property type="gene ID" value="ENSG00000133858.17"/>
</dbReference>
<dbReference type="Ensembl" id="ENST00000548100.1">
    <molecule id="O60293-4"/>
    <property type="protein sequence ID" value="ENSP00000450044.1"/>
    <property type="gene ID" value="ENSG00000133858.17"/>
</dbReference>
<dbReference type="Ensembl" id="ENST00000552994.5">
    <molecule id="O60293-2"/>
    <property type="protein sequence ID" value="ENSP00000446995.1"/>
    <property type="gene ID" value="ENSG00000133858.17"/>
</dbReference>
<dbReference type="GeneID" id="196441"/>
<dbReference type="KEGG" id="hsa:196441"/>
<dbReference type="MANE-Select" id="ENST00000378743.9">
    <property type="protein sequence ID" value="ENSP00000368017.4"/>
    <property type="RefSeq nucleotide sequence ID" value="NM_144982.5"/>
    <property type="RefSeq protein sequence ID" value="NP_659419.3"/>
</dbReference>
<dbReference type="UCSC" id="uc001swo.4">
    <molecule id="O60293-1"/>
    <property type="organism name" value="human"/>
</dbReference>
<dbReference type="AGR" id="HGNC:28328"/>
<dbReference type="CTD" id="196441"/>
<dbReference type="DisGeNET" id="196441"/>
<dbReference type="GeneCards" id="ZFC3H1"/>
<dbReference type="HGNC" id="HGNC:28328">
    <property type="gene designation" value="ZFC3H1"/>
</dbReference>
<dbReference type="HPA" id="ENSG00000133858">
    <property type="expression patterns" value="Low tissue specificity"/>
</dbReference>
<dbReference type="MIM" id="620956">
    <property type="type" value="gene"/>
</dbReference>
<dbReference type="neXtProt" id="NX_O60293"/>
<dbReference type="OpenTargets" id="ENSG00000133858"/>
<dbReference type="PharmGKB" id="PA164727644"/>
<dbReference type="VEuPathDB" id="HostDB:ENSG00000133858"/>
<dbReference type="eggNOG" id="KOG4839">
    <property type="taxonomic scope" value="Eukaryota"/>
</dbReference>
<dbReference type="GeneTree" id="ENSGT00390000001116"/>
<dbReference type="HOGENOM" id="CLU_002490_0_0_1"/>
<dbReference type="InParanoid" id="O60293"/>
<dbReference type="OMA" id="CKENFDD"/>
<dbReference type="OrthoDB" id="1922977at2759"/>
<dbReference type="PAN-GO" id="O60293">
    <property type="GO annotations" value="2 GO annotations based on evolutionary models"/>
</dbReference>
<dbReference type="PhylomeDB" id="O60293"/>
<dbReference type="TreeFam" id="TF331613"/>
<dbReference type="PathwayCommons" id="O60293"/>
<dbReference type="SignaLink" id="O60293"/>
<dbReference type="BioGRID-ORCS" id="196441">
    <property type="hits" value="335 hits in 1164 CRISPR screens"/>
</dbReference>
<dbReference type="CD-CODE" id="91857CE7">
    <property type="entry name" value="Nucleolus"/>
</dbReference>
<dbReference type="ChiTaRS" id="ZFC3H1">
    <property type="organism name" value="human"/>
</dbReference>
<dbReference type="GenomeRNAi" id="196441"/>
<dbReference type="Pharos" id="O60293">
    <property type="development level" value="Tbio"/>
</dbReference>
<dbReference type="PRO" id="PR:O60293"/>
<dbReference type="Proteomes" id="UP000005640">
    <property type="component" value="Chromosome 12"/>
</dbReference>
<dbReference type="RNAct" id="O60293">
    <property type="molecule type" value="protein"/>
</dbReference>
<dbReference type="Bgee" id="ENSG00000133858">
    <property type="expression patterns" value="Expressed in sperm and 199 other cell types or tissues"/>
</dbReference>
<dbReference type="ExpressionAtlas" id="O60293">
    <property type="expression patterns" value="baseline and differential"/>
</dbReference>
<dbReference type="GO" id="GO:0000178">
    <property type="term" value="C:exosome (RNase complex)"/>
    <property type="evidence" value="ECO:0000318"/>
    <property type="project" value="GO_Central"/>
</dbReference>
<dbReference type="GO" id="GO:0005615">
    <property type="term" value="C:extracellular space"/>
    <property type="evidence" value="ECO:0007005"/>
    <property type="project" value="UniProtKB"/>
</dbReference>
<dbReference type="GO" id="GO:1990477">
    <property type="term" value="C:MTREC complex"/>
    <property type="evidence" value="ECO:0000314"/>
    <property type="project" value="UniProtKB"/>
</dbReference>
<dbReference type="GO" id="GO:0005634">
    <property type="term" value="C:nucleus"/>
    <property type="evidence" value="ECO:0000314"/>
    <property type="project" value="UniProtKB"/>
</dbReference>
<dbReference type="GO" id="GO:0008270">
    <property type="term" value="F:zinc ion binding"/>
    <property type="evidence" value="ECO:0007669"/>
    <property type="project" value="UniProtKB-KW"/>
</dbReference>
<dbReference type="GO" id="GO:0006396">
    <property type="term" value="P:RNA processing"/>
    <property type="evidence" value="ECO:0007669"/>
    <property type="project" value="InterPro"/>
</dbReference>
<dbReference type="Gene3D" id="1.25.40.10">
    <property type="entry name" value="Tetratricopeptide repeat domain"/>
    <property type="match status" value="2"/>
</dbReference>
<dbReference type="InterPro" id="IPR003107">
    <property type="entry name" value="HAT"/>
</dbReference>
<dbReference type="InterPro" id="IPR019607">
    <property type="entry name" value="Putative_zinc-finger_domain"/>
</dbReference>
<dbReference type="InterPro" id="IPR039278">
    <property type="entry name" value="Red1"/>
</dbReference>
<dbReference type="InterPro" id="IPR011990">
    <property type="entry name" value="TPR-like_helical_dom_sf"/>
</dbReference>
<dbReference type="PANTHER" id="PTHR21563">
    <property type="entry name" value="ZINC FINGER C3H1 DOMAIN-CONTAINING PROTEIN"/>
    <property type="match status" value="1"/>
</dbReference>
<dbReference type="PANTHER" id="PTHR21563:SF3">
    <property type="entry name" value="ZINC FINGER C3H1 DOMAIN-CONTAINING PROTEIN"/>
    <property type="match status" value="1"/>
</dbReference>
<dbReference type="Pfam" id="PF10650">
    <property type="entry name" value="zf-C3H1"/>
    <property type="match status" value="1"/>
</dbReference>
<dbReference type="SMART" id="SM00386">
    <property type="entry name" value="HAT"/>
    <property type="match status" value="5"/>
</dbReference>
<dbReference type="SUPFAM" id="SSF48452">
    <property type="entry name" value="TPR-like"/>
    <property type="match status" value="2"/>
</dbReference>
<dbReference type="PROSITE" id="PS50293">
    <property type="entry name" value="TPR_REGION"/>
    <property type="match status" value="2"/>
</dbReference>
<sequence>MATADTPAPASSGLSPKEEGELEDGEISDDDNNSQIRSRSSSSSSGGGLLPYPRRRPPHSARGGGSGGGGGSSSSSSSSQQQLRNFSRSRHASERGHLRGPSSYRPKEPFRSHPPSVRMPSSSLSESSPRPSFWERSHLALDRFRFRGRPYRGGSRWSRGRGVGERGGKPGCRPPLGGGAGSGFSSSQSWREPSPPRKSSKSFGRSPSRKQNYSSKNENCVEETFEDLLLKYKQIQLELECINKDEKLALSSKEENVQEDPKTLNFEDQTSTDNVSITKDSSKEVAPEEKTQVKTFQAFELKPLRQKLTLPGDKNRLKKVKDGAKPLSLKSDTTDSSQGLQDKEQNLTRRISTSDILSEKKLGEDEEELSELQLRLLALQSASKKWQQKEQQVMKESKEKLTKTKTVQQKVKTSTKTHSAKKVSTTAKQALRKQQTKAWKKLQQQKEQERQKEEDQRKQAEEEERRKREEEIRKIRDLSNQEEQYNRFMKLVGGKRRSRSKSSDPDLRRSLDKQPTDSGGGIYQYDNYEEVAMDTDSETSSPAPSPVQPPFFSECSLGYFSPAPSLSLPPPPQVSSLPPLSQPYVEGLCVSLEPLPPLPPLPPLPPEDPEQPPKPPFADEEEEEEMLLREELLKSLANKRAFKPEETSSNSDPPSPPVLNNSHPVPRSNLSIVSINTVSQPRIQNPKFHRGPRLPRTVISLPKHKSVVVTLNDSDDSESDGEASKSTNSVFGGLESMIKEARRTAEQASKPKVPPKSEKENDPLRTPEALPEEKKIEYRLLKEEIANREKQRLIKSDQLKTSSSSPANSDVEIDGIGRIAMVTKQVTDAESKLKKHRILLMKDESVLKNLVQQEAKKKESVRNAEAKITKLTEQLQATEKILNVNRMFLKKLQEQIHRVQQRVTIKKALTLKYGEELARAKAVASKEIGKRKLEQDRFGPNKMMRLDSSPVSSPRKHSAELIAMEKRRLQKLEYEYALKIQKLKEARALKAKEQQNISPVVEEEPEFSLPQPSLHDLTQDKLTLDTEENDVDDEILSGSSRERRRSFLESNYFTKPNLKHTDTANKECINKLNKNTVEKPELFLGLKIGELQKLYSKADSLKQLILKTTTGITEKVLHGQEISVDVDFVTAQSKTMEVKPCPFRPYHSPLLVFKSYRFSPYYRTKEKLPLSSVSYSNMIEPDQCFCRFDLTGTCNDDDCQWQHIQDYTLSRKQLFQDILSYNLSLIGCAETSTNEEITASAEKYVEKLFGVNKDRMSMDQMAVLLVSNINESKGHTPPFTTYKDKRKWKPKFWRKPISDNSFSSDEEQSTGPIKYAFQPENQINVPALDTVVTPDDVRYFTNETDDIANLEASVLENPSHVQLWLKLAYKYLNQNEGECSESLDSALNVLARALENNKDNPEIWCHYLRLFSKRGTKDEVQEMCETAVEYAPDYQSFWTFLHLESTFEEKDYVCERMLEFLMGAAKQETSNILSFQLLEALLFRVQLHIFTGRCQSALAILQNALKSANDGIVAEYLKTSDRCLAWLAYIHLIEFNILPSKFYDPSNDNPSRIVNTESFVMPWQAVQDVKTNPDMLLAVFEDAVKACTDESLAVEERIEACLPLYTNMIALHQLLERYEAAMELCKSLLESCPINCQLLEALVALYLQTNQHDKARAVWLTAFEKNPQNAEVFYHMCKFFILQNRGDNLLPFLRKFIASFFKPGFEKYNNLDLFRYLLNIPGPIDIPSRLCKGNFDDDMFNHQVPYLWLIYCLCHPLQSSIKETVEAYEAALGVAMRCDIVQKIWMDYLVFANNRAAGSRNKVQEFKFFTDLVNRCLVTVPARYPIPFSSADYWSNYEFHNRVIFFYLSCVPKTQHSKTLERFCSVMPANSGLALRLLQHEWEESNVQILKLQAKMFTYNIPTCLATWKIAIAAEIVLKGQREVHRLYQRALQKLPLCASLWKDQLLFEASEGGKTDNLRKLVSKCQEIGVSLNELLNLNSNKTESKNH</sequence>
<accession>O60293</accession>
<accession>Q6GMU1</accession>
<accession>Q6P2S9</accession>
<accession>Q6ZV36</accession>
<accession>Q96BE7</accession>
<feature type="initiator methionine" description="Removed" evidence="10">
    <location>
        <position position="1"/>
    </location>
</feature>
<feature type="chain" id="PRO_0000286103" description="Zinc finger C3H1 domain-containing protein">
    <location>
        <begin position="2"/>
        <end position="1989"/>
    </location>
</feature>
<feature type="repeat" description="TPR 1">
    <location>
        <begin position="1361"/>
        <end position="1400"/>
    </location>
</feature>
<feature type="repeat" description="TPR 2">
    <location>
        <begin position="1401"/>
        <end position="1434"/>
    </location>
</feature>
<feature type="repeat" description="TPR 3">
    <location>
        <begin position="1438"/>
        <end position="1471"/>
    </location>
</feature>
<feature type="repeat" description="TPR 4">
    <location>
        <begin position="1478"/>
        <end position="1511"/>
    </location>
</feature>
<feature type="repeat" description="TPR 5">
    <location>
        <begin position="1602"/>
        <end position="1635"/>
    </location>
</feature>
<feature type="repeat" description="TPR 6">
    <location>
        <begin position="1636"/>
        <end position="1669"/>
    </location>
</feature>
<feature type="repeat" description="TPR 7">
    <location>
        <begin position="1745"/>
        <end position="1778"/>
    </location>
</feature>
<feature type="zinc finger region" description="C3H1-type">
    <location>
        <begin position="1185"/>
        <end position="1206"/>
    </location>
</feature>
<feature type="region of interest" description="Disordered" evidence="2">
    <location>
        <begin position="1"/>
        <end position="133"/>
    </location>
</feature>
<feature type="region of interest" description="Disordered" evidence="2">
    <location>
        <begin position="148"/>
        <end position="218"/>
    </location>
</feature>
<feature type="region of interest" description="Disordered" evidence="2">
    <location>
        <begin position="251"/>
        <end position="290"/>
    </location>
</feature>
<feature type="region of interest" description="Disordered" evidence="2">
    <location>
        <begin position="310"/>
        <end position="365"/>
    </location>
</feature>
<feature type="region of interest" description="Disordered" evidence="2">
    <location>
        <begin position="385"/>
        <end position="671"/>
    </location>
</feature>
<feature type="region of interest" description="Disordered" evidence="2">
    <location>
        <begin position="711"/>
        <end position="770"/>
    </location>
</feature>
<feature type="coiled-coil region" evidence="1">
    <location>
        <begin position="219"/>
        <end position="259"/>
    </location>
</feature>
<feature type="coiled-coil region" evidence="1">
    <location>
        <begin position="358"/>
        <end position="389"/>
    </location>
</feature>
<feature type="coiled-coil region" evidence="1">
    <location>
        <begin position="432"/>
        <end position="487"/>
    </location>
</feature>
<feature type="coiled-coil region" evidence="1">
    <location>
        <begin position="847"/>
        <end position="909"/>
    </location>
</feature>
<feature type="coiled-coil region" evidence="1">
    <location>
        <begin position="965"/>
        <end position="989"/>
    </location>
</feature>
<feature type="compositionally biased region" description="Acidic residues" evidence="2">
    <location>
        <begin position="20"/>
        <end position="32"/>
    </location>
</feature>
<feature type="compositionally biased region" description="Low complexity" evidence="2">
    <location>
        <begin position="33"/>
        <end position="44"/>
    </location>
</feature>
<feature type="compositionally biased region" description="Gly residues" evidence="2">
    <location>
        <begin position="62"/>
        <end position="72"/>
    </location>
</feature>
<feature type="compositionally biased region" description="Low complexity" evidence="2">
    <location>
        <begin position="114"/>
        <end position="132"/>
    </location>
</feature>
<feature type="compositionally biased region" description="Low complexity" evidence="2">
    <location>
        <begin position="183"/>
        <end position="192"/>
    </location>
</feature>
<feature type="compositionally biased region" description="Low complexity" evidence="2">
    <location>
        <begin position="201"/>
        <end position="210"/>
    </location>
</feature>
<feature type="compositionally biased region" description="Basic and acidic residues" evidence="2">
    <location>
        <begin position="251"/>
        <end position="262"/>
    </location>
</feature>
<feature type="compositionally biased region" description="Polar residues" evidence="2">
    <location>
        <begin position="266"/>
        <end position="279"/>
    </location>
</feature>
<feature type="compositionally biased region" description="Basic and acidic residues" evidence="2">
    <location>
        <begin position="280"/>
        <end position="290"/>
    </location>
</feature>
<feature type="compositionally biased region" description="Polar residues" evidence="2">
    <location>
        <begin position="330"/>
        <end position="340"/>
    </location>
</feature>
<feature type="compositionally biased region" description="Basic and acidic residues" evidence="2">
    <location>
        <begin position="392"/>
        <end position="402"/>
    </location>
</feature>
<feature type="compositionally biased region" description="Basic residues" evidence="2">
    <location>
        <begin position="430"/>
        <end position="440"/>
    </location>
</feature>
<feature type="compositionally biased region" description="Basic and acidic residues" evidence="2">
    <location>
        <begin position="444"/>
        <end position="479"/>
    </location>
</feature>
<feature type="compositionally biased region" description="Basic and acidic residues" evidence="2">
    <location>
        <begin position="501"/>
        <end position="515"/>
    </location>
</feature>
<feature type="compositionally biased region" description="Acidic residues" evidence="2">
    <location>
        <begin position="527"/>
        <end position="537"/>
    </location>
</feature>
<feature type="compositionally biased region" description="Low complexity" evidence="2">
    <location>
        <begin position="574"/>
        <end position="583"/>
    </location>
</feature>
<feature type="compositionally biased region" description="Pro residues" evidence="2">
    <location>
        <begin position="594"/>
        <end position="616"/>
    </location>
</feature>
<feature type="compositionally biased region" description="Polar residues" evidence="2">
    <location>
        <begin position="647"/>
        <end position="671"/>
    </location>
</feature>
<feature type="compositionally biased region" description="Basic and acidic residues" evidence="2">
    <location>
        <begin position="755"/>
        <end position="770"/>
    </location>
</feature>
<feature type="modified residue" description="N-acetylalanine" evidence="10">
    <location>
        <position position="2"/>
    </location>
</feature>
<feature type="modified residue" description="Phosphoserine" evidence="10 12">
    <location>
        <position position="15"/>
    </location>
</feature>
<feature type="modified residue" description="Phosphoserine" evidence="7 8 10 11">
    <location>
        <position position="28"/>
    </location>
</feature>
<feature type="modified residue" description="Phosphoserine" evidence="7">
    <location>
        <position position="34"/>
    </location>
</feature>
<feature type="modified residue" description="Phosphoserine" evidence="12">
    <location>
        <position position="128"/>
    </location>
</feature>
<feature type="modified residue" description="Phosphoserine" evidence="12">
    <location>
        <position position="251"/>
    </location>
</feature>
<feature type="modified residue" description="Phosphoserine" evidence="8 10 11 12">
    <location>
        <position position="352"/>
    </location>
</feature>
<feature type="modified residue" description="Phosphoserine" evidence="12">
    <location>
        <position position="383"/>
    </location>
</feature>
<feature type="modified residue" description="Phosphoserine" evidence="12">
    <location>
        <position position="662"/>
    </location>
</feature>
<feature type="modified residue" description="Phosphoserine" evidence="8 11">
    <location>
        <position position="714"/>
    </location>
</feature>
<feature type="modified residue" description="Phosphoserine" evidence="8 11">
    <location>
        <position position="717"/>
    </location>
</feature>
<feature type="modified residue" description="Phosphoserine" evidence="8 11">
    <location>
        <position position="719"/>
    </location>
</feature>
<feature type="modified residue" description="Phosphothreonine" evidence="12">
    <location>
        <position position="766"/>
    </location>
</feature>
<feature type="modified residue" description="Phosphoserine" evidence="12">
    <location>
        <position position="805"/>
    </location>
</feature>
<feature type="modified residue" description="Phosphoserine" evidence="8 9 12">
    <location>
        <position position="809"/>
    </location>
</feature>
<feature type="modified residue" description="Phosphoserine" evidence="12">
    <location>
        <position position="948"/>
    </location>
</feature>
<feature type="modified residue" description="Phosphoserine" evidence="8 10 12">
    <location>
        <position position="949"/>
    </location>
</feature>
<feature type="modified residue" description="Phosphoserine" evidence="8">
    <location>
        <position position="953"/>
    </location>
</feature>
<feature type="modified residue" description="Phosphoserine" evidence="8">
    <location>
        <position position="998"/>
    </location>
</feature>
<feature type="modified residue" description="Phosphoserine" evidence="8 12">
    <location>
        <position position="1046"/>
    </location>
</feature>
<feature type="modified residue" description="Phosphoserine" evidence="12">
    <location>
        <position position="1301"/>
    </location>
</feature>
<feature type="modified residue" description="Phosphoserine" evidence="8 10 11 12">
    <location>
        <position position="1303"/>
    </location>
</feature>
<feature type="modified residue" description="Phosphoserine" evidence="8 10 11 12">
    <location>
        <position position="1304"/>
    </location>
</feature>
<feature type="splice variant" id="VSP_024992" description="In isoform 4." evidence="4">
    <original>LQDKEQN</original>
    <variation>NGIKYFS</variation>
    <location>
        <begin position="340"/>
        <end position="346"/>
    </location>
</feature>
<feature type="splice variant" id="VSP_024993" description="In isoform 4." evidence="4">
    <location>
        <begin position="347"/>
        <end position="1989"/>
    </location>
</feature>
<feature type="splice variant" id="VSP_024995" description="In isoform 2." evidence="5">
    <original>IAIAAEIVLKGQREVHRLYQRALQKLPLCASLWKDQLLFEASEGGKTDNLRKLVSKCQEIGVSLNELLNLNSNKTESKNH</original>
    <variation>M</variation>
    <location>
        <begin position="1910"/>
        <end position="1989"/>
    </location>
</feature>
<feature type="sequence variant" id="VAR_032070" description="In dbSNP:rs1011332.">
    <original>E</original>
    <variation>K</variation>
    <location>
        <position position="1006"/>
    </location>
</feature>
<feature type="sequence variant" id="VAR_032071" description="In dbSNP:rs11541286.">
    <original>K</original>
    <variation>R</variation>
    <location>
        <position position="1807"/>
    </location>
</feature>
<reference key="1">
    <citation type="journal article" date="1998" name="DNA Res.">
        <title>Prediction of the coding sequences of unidentified human genes. IX. The complete sequences of 100 new cDNA clones from brain which can code for large proteins in vitro.</title>
        <authorList>
            <person name="Nagase T."/>
            <person name="Ishikawa K."/>
            <person name="Miyajima N."/>
            <person name="Tanaka A."/>
            <person name="Kotani H."/>
            <person name="Nomura N."/>
            <person name="Ohara O."/>
        </authorList>
    </citation>
    <scope>NUCLEOTIDE SEQUENCE [LARGE SCALE MRNA] (ISOFORM 2)</scope>
    <source>
        <tissue>Brain</tissue>
    </source>
</reference>
<reference key="2">
    <citation type="journal article" date="2004" name="Genome Res.">
        <title>The status, quality, and expansion of the NIH full-length cDNA project: the Mammalian Gene Collection (MGC).</title>
        <authorList>
            <consortium name="The MGC Project Team"/>
        </authorList>
    </citation>
    <scope>NUCLEOTIDE SEQUENCE [LARGE SCALE MRNA] (ISOFORM 4)</scope>
    <scope>NUCLEOTIDE SEQUENCE [LARGE SCALE MRNA] OF 1-396 (ISOFORMS 1/2)</scope>
    <source>
        <tissue>Blood</tissue>
        <tissue>Lymph</tissue>
    </source>
</reference>
<reference key="3">
    <citation type="journal article" date="2004" name="Nat. Genet.">
        <title>Complete sequencing and characterization of 21,243 full-length human cDNAs.</title>
        <authorList>
            <person name="Ota T."/>
            <person name="Suzuki Y."/>
            <person name="Nishikawa T."/>
            <person name="Otsuki T."/>
            <person name="Sugiyama T."/>
            <person name="Irie R."/>
            <person name="Wakamatsu A."/>
            <person name="Hayashi K."/>
            <person name="Sato H."/>
            <person name="Nagai K."/>
            <person name="Kimura K."/>
            <person name="Makita H."/>
            <person name="Sekine M."/>
            <person name="Obayashi M."/>
            <person name="Nishi T."/>
            <person name="Shibahara T."/>
            <person name="Tanaka T."/>
            <person name="Ishii S."/>
            <person name="Yamamoto J."/>
            <person name="Saito K."/>
            <person name="Kawai Y."/>
            <person name="Isono Y."/>
            <person name="Nakamura Y."/>
            <person name="Nagahari K."/>
            <person name="Murakami K."/>
            <person name="Yasuda T."/>
            <person name="Iwayanagi T."/>
            <person name="Wagatsuma M."/>
            <person name="Shiratori A."/>
            <person name="Sudo H."/>
            <person name="Hosoiri T."/>
            <person name="Kaku Y."/>
            <person name="Kodaira H."/>
            <person name="Kondo H."/>
            <person name="Sugawara M."/>
            <person name="Takahashi M."/>
            <person name="Kanda K."/>
            <person name="Yokoi T."/>
            <person name="Furuya T."/>
            <person name="Kikkawa E."/>
            <person name="Omura Y."/>
            <person name="Abe K."/>
            <person name="Kamihara K."/>
            <person name="Katsuta N."/>
            <person name="Sato K."/>
            <person name="Tanikawa M."/>
            <person name="Yamazaki M."/>
            <person name="Ninomiya K."/>
            <person name="Ishibashi T."/>
            <person name="Yamashita H."/>
            <person name="Murakawa K."/>
            <person name="Fujimori K."/>
            <person name="Tanai H."/>
            <person name="Kimata M."/>
            <person name="Watanabe M."/>
            <person name="Hiraoka S."/>
            <person name="Chiba Y."/>
            <person name="Ishida S."/>
            <person name="Ono Y."/>
            <person name="Takiguchi S."/>
            <person name="Watanabe S."/>
            <person name="Yosida M."/>
            <person name="Hotuta T."/>
            <person name="Kusano J."/>
            <person name="Kanehori K."/>
            <person name="Takahashi-Fujii A."/>
            <person name="Hara H."/>
            <person name="Tanase T.-O."/>
            <person name="Nomura Y."/>
            <person name="Togiya S."/>
            <person name="Komai F."/>
            <person name="Hara R."/>
            <person name="Takeuchi K."/>
            <person name="Arita M."/>
            <person name="Imose N."/>
            <person name="Musashino K."/>
            <person name="Yuuki H."/>
            <person name="Oshima A."/>
            <person name="Sasaki N."/>
            <person name="Aotsuka S."/>
            <person name="Yoshikawa Y."/>
            <person name="Matsunawa H."/>
            <person name="Ichihara T."/>
            <person name="Shiohata N."/>
            <person name="Sano S."/>
            <person name="Moriya S."/>
            <person name="Momiyama H."/>
            <person name="Satoh N."/>
            <person name="Takami S."/>
            <person name="Terashima Y."/>
            <person name="Suzuki O."/>
            <person name="Nakagawa S."/>
            <person name="Senoh A."/>
            <person name="Mizoguchi H."/>
            <person name="Goto Y."/>
            <person name="Shimizu F."/>
            <person name="Wakebe H."/>
            <person name="Hishigaki H."/>
            <person name="Watanabe T."/>
            <person name="Sugiyama A."/>
            <person name="Takemoto M."/>
            <person name="Kawakami B."/>
            <person name="Yamazaki M."/>
            <person name="Watanabe K."/>
            <person name="Kumagai A."/>
            <person name="Itakura S."/>
            <person name="Fukuzumi Y."/>
            <person name="Fujimori Y."/>
            <person name="Komiyama M."/>
            <person name="Tashiro H."/>
            <person name="Tanigami A."/>
            <person name="Fujiwara T."/>
            <person name="Ono T."/>
            <person name="Yamada K."/>
            <person name="Fujii Y."/>
            <person name="Ozaki K."/>
            <person name="Hirao M."/>
            <person name="Ohmori Y."/>
            <person name="Kawabata A."/>
            <person name="Hikiji T."/>
            <person name="Kobatake N."/>
            <person name="Inagaki H."/>
            <person name="Ikema Y."/>
            <person name="Okamoto S."/>
            <person name="Okitani R."/>
            <person name="Kawakami T."/>
            <person name="Noguchi S."/>
            <person name="Itoh T."/>
            <person name="Shigeta K."/>
            <person name="Senba T."/>
            <person name="Matsumura K."/>
            <person name="Nakajima Y."/>
            <person name="Mizuno T."/>
            <person name="Morinaga M."/>
            <person name="Sasaki M."/>
            <person name="Togashi T."/>
            <person name="Oyama M."/>
            <person name="Hata H."/>
            <person name="Watanabe M."/>
            <person name="Komatsu T."/>
            <person name="Mizushima-Sugano J."/>
            <person name="Satoh T."/>
            <person name="Shirai Y."/>
            <person name="Takahashi Y."/>
            <person name="Nakagawa K."/>
            <person name="Okumura K."/>
            <person name="Nagase T."/>
            <person name="Nomura N."/>
            <person name="Kikuchi H."/>
            <person name="Masuho Y."/>
            <person name="Yamashita R."/>
            <person name="Nakai K."/>
            <person name="Yada T."/>
            <person name="Nakamura Y."/>
            <person name="Ohara O."/>
            <person name="Isogai T."/>
            <person name="Sugano S."/>
        </authorList>
    </citation>
    <scope>NUCLEOTIDE SEQUENCE [LARGE SCALE MRNA] OF 730-1989 (ISOFORM 1)</scope>
    <source>
        <tissue>Thalamus</tissue>
    </source>
</reference>
<reference key="4">
    <citation type="journal article" date="2007" name="Science">
        <title>ATM and ATR substrate analysis reveals extensive protein networks responsive to DNA damage.</title>
        <authorList>
            <person name="Matsuoka S."/>
            <person name="Ballif B.A."/>
            <person name="Smogorzewska A."/>
            <person name="McDonald E.R. III"/>
            <person name="Hurov K.E."/>
            <person name="Luo J."/>
            <person name="Bakalarski C.E."/>
            <person name="Zhao Z."/>
            <person name="Solimini N."/>
            <person name="Lerenthal Y."/>
            <person name="Shiloh Y."/>
            <person name="Gygi S.P."/>
            <person name="Elledge S.J."/>
        </authorList>
    </citation>
    <scope>PHOSPHORYLATION [LARGE SCALE ANALYSIS] AT SER-28 AND SER-34</scope>
    <scope>IDENTIFICATION BY MASS SPECTROMETRY [LARGE SCALE ANALYSIS]</scope>
    <source>
        <tissue>Embryonic kidney</tissue>
    </source>
</reference>
<reference key="5">
    <citation type="journal article" date="2008" name="Proc. Natl. Acad. Sci. U.S.A.">
        <title>A quantitative atlas of mitotic phosphorylation.</title>
        <authorList>
            <person name="Dephoure N."/>
            <person name="Zhou C."/>
            <person name="Villen J."/>
            <person name="Beausoleil S.A."/>
            <person name="Bakalarski C.E."/>
            <person name="Elledge S.J."/>
            <person name="Gygi S.P."/>
        </authorList>
    </citation>
    <scope>PHOSPHORYLATION [LARGE SCALE ANALYSIS] AT SER-28; SER-352; SER-714; SER-717; SER-719; SER-809; SER-949; SER-953; SER-998; SER-1046; SER-1303 AND SER-1304</scope>
    <scope>IDENTIFICATION BY MASS SPECTROMETRY [LARGE SCALE ANALYSIS]</scope>
    <source>
        <tissue>Cervix carcinoma</tissue>
    </source>
</reference>
<reference key="6">
    <citation type="journal article" date="2009" name="Anal. Chem.">
        <title>Lys-N and trypsin cover complementary parts of the phosphoproteome in a refined SCX-based approach.</title>
        <authorList>
            <person name="Gauci S."/>
            <person name="Helbig A.O."/>
            <person name="Slijper M."/>
            <person name="Krijgsveld J."/>
            <person name="Heck A.J."/>
            <person name="Mohammed S."/>
        </authorList>
    </citation>
    <scope>IDENTIFICATION BY MASS SPECTROMETRY [LARGE SCALE ANALYSIS]</scope>
</reference>
<reference key="7">
    <citation type="journal article" date="2009" name="Sci. Signal.">
        <title>Quantitative phosphoproteomic analysis of T cell receptor signaling reveals system-wide modulation of protein-protein interactions.</title>
        <authorList>
            <person name="Mayya V."/>
            <person name="Lundgren D.H."/>
            <person name="Hwang S.-I."/>
            <person name="Rezaul K."/>
            <person name="Wu L."/>
            <person name="Eng J.K."/>
            <person name="Rodionov V."/>
            <person name="Han D.K."/>
        </authorList>
    </citation>
    <scope>PHOSPHORYLATION [LARGE SCALE ANALYSIS] AT SER-809</scope>
    <scope>IDENTIFICATION BY MASS SPECTROMETRY [LARGE SCALE ANALYSIS]</scope>
    <source>
        <tissue>Leukemic T-cell</tissue>
    </source>
</reference>
<reference key="8">
    <citation type="journal article" date="2010" name="Sci. Signal.">
        <title>Quantitative phosphoproteomics reveals widespread full phosphorylation site occupancy during mitosis.</title>
        <authorList>
            <person name="Olsen J.V."/>
            <person name="Vermeulen M."/>
            <person name="Santamaria A."/>
            <person name="Kumar C."/>
            <person name="Miller M.L."/>
            <person name="Jensen L.J."/>
            <person name="Gnad F."/>
            <person name="Cox J."/>
            <person name="Jensen T.S."/>
            <person name="Nigg E.A."/>
            <person name="Brunak S."/>
            <person name="Mann M."/>
        </authorList>
    </citation>
    <scope>ACETYLATION [LARGE SCALE ANALYSIS] AT ALA-2</scope>
    <scope>PHOSPHORYLATION [LARGE SCALE ANALYSIS] AT SER-15; SER-28; SER-352; SER-949; SER-1303 AND SER-1304</scope>
    <scope>CLEAVAGE OF INITIATOR METHIONINE [LARGE SCALE ANALYSIS]</scope>
    <scope>IDENTIFICATION BY MASS SPECTROMETRY [LARGE SCALE ANALYSIS]</scope>
    <source>
        <tissue>Cervix carcinoma</tissue>
    </source>
</reference>
<reference key="9">
    <citation type="journal article" date="2011" name="BMC Syst. Biol.">
        <title>Initial characterization of the human central proteome.</title>
        <authorList>
            <person name="Burkard T.R."/>
            <person name="Planyavsky M."/>
            <person name="Kaupe I."/>
            <person name="Breitwieser F.P."/>
            <person name="Buerckstuemmer T."/>
            <person name="Bennett K.L."/>
            <person name="Superti-Furga G."/>
            <person name="Colinge J."/>
        </authorList>
    </citation>
    <scope>IDENTIFICATION BY MASS SPECTROMETRY [LARGE SCALE ANALYSIS]</scope>
</reference>
<reference key="10">
    <citation type="journal article" date="2011" name="Sci. Signal.">
        <title>System-wide temporal characterization of the proteome and phosphoproteome of human embryonic stem cell differentiation.</title>
        <authorList>
            <person name="Rigbolt K.T."/>
            <person name="Prokhorova T.A."/>
            <person name="Akimov V."/>
            <person name="Henningsen J."/>
            <person name="Johansen P.T."/>
            <person name="Kratchmarova I."/>
            <person name="Kassem M."/>
            <person name="Mann M."/>
            <person name="Olsen J.V."/>
            <person name="Blagoev B."/>
        </authorList>
    </citation>
    <scope>PHOSPHORYLATION [LARGE SCALE ANALYSIS] AT SER-28; SER-352; SER-714; SER-717; SER-719; SER-1303 AND SER-1304</scope>
    <scope>IDENTIFICATION BY MASS SPECTROMETRY [LARGE SCALE ANALYSIS]</scope>
</reference>
<reference key="11">
    <citation type="journal article" date="2013" name="J. Proteome Res.">
        <title>Toward a comprehensive characterization of a human cancer cell phosphoproteome.</title>
        <authorList>
            <person name="Zhou H."/>
            <person name="Di Palma S."/>
            <person name="Preisinger C."/>
            <person name="Peng M."/>
            <person name="Polat A.N."/>
            <person name="Heck A.J."/>
            <person name="Mohammed S."/>
        </authorList>
    </citation>
    <scope>PHOSPHORYLATION [LARGE SCALE ANALYSIS] AT SER-15; SER-128; SER-251; SER-352; SER-383; SER-662; THR-766; SER-805; SER-809; SER-948; SER-949; SER-1046; SER-1301; SER-1303 AND SER-1304</scope>
    <scope>IDENTIFICATION BY MASS SPECTROMETRY [LARGE SCALE ANALYSIS]</scope>
    <source>
        <tissue>Cervix carcinoma</tissue>
        <tissue>Erythroleukemia</tissue>
    </source>
</reference>
<reference key="12">
    <citation type="journal article" date="2014" name="J. Proteomics">
        <title>An enzyme assisted RP-RPLC approach for in-depth analysis of human liver phosphoproteome.</title>
        <authorList>
            <person name="Bian Y."/>
            <person name="Song C."/>
            <person name="Cheng K."/>
            <person name="Dong M."/>
            <person name="Wang F."/>
            <person name="Huang J."/>
            <person name="Sun D."/>
            <person name="Wang L."/>
            <person name="Ye M."/>
            <person name="Zou H."/>
        </authorList>
    </citation>
    <scope>IDENTIFICATION BY MASS SPECTROMETRY [LARGE SCALE ANALYSIS]</scope>
    <source>
        <tissue>Liver</tissue>
    </source>
</reference>
<reference key="13">
    <citation type="journal article" date="2016" name="Mol. Cell">
        <title>Identification of a nuclear exosome decay pathway for processed transcripts.</title>
        <authorList>
            <person name="Meola N."/>
            <person name="Domanski M."/>
            <person name="Karadoulama E."/>
            <person name="Chen Y."/>
            <person name="Gentil C."/>
            <person name="Pultz D."/>
            <person name="Vitting-Seerup K."/>
            <person name="Lykke-Andersen S."/>
            <person name="Andersen J.S."/>
            <person name="Sandelin A."/>
            <person name="Jensen T.H."/>
        </authorList>
    </citation>
    <scope>FUNCTION</scope>
    <scope>SUBUNIT</scope>
    <scope>INTERACTION WITH NCBP1/CBP80; PABPC4; PABPC1; PABPN1; ZC3H14; MTREX AND ZC3H18</scope>
    <scope>SUBCELLULAR LOCATION</scope>
</reference>